<protein>
    <recommendedName>
        <fullName evidence="1">8-oxoguanine DNA glycosylase/AP lyase</fullName>
    </recommendedName>
    <domain>
        <recommendedName>
            <fullName evidence="1">8-oxoguanine DNA glycosylase</fullName>
            <shortName evidence="1">8-oxoG DNA glycosylase</shortName>
            <ecNumber evidence="1">3.2.2.-</ecNumber>
        </recommendedName>
    </domain>
    <domain>
        <recommendedName>
            <fullName evidence="1">DNA-(apurinic or apyrimidinic site) lyase</fullName>
            <shortName evidence="1">AP lyase</shortName>
            <ecNumber evidence="1">4.2.99.18</ecNumber>
        </recommendedName>
    </domain>
</protein>
<gene>
    <name evidence="1" type="primary">ogg</name>
    <name type="ordered locus">Ta0014</name>
</gene>
<comment type="function">
    <text evidence="1">Catalyzes the excision of an oxidatively damaged form of guanine (7,8-dihydro-8-oxoguanine = 8-oxoG) from DNA. Also cleaves the DNA backbone at apurinic/apyrimidinic sites (AP sites).</text>
</comment>
<comment type="catalytic activity">
    <reaction evidence="1">
        <text>2'-deoxyribonucleotide-(2'-deoxyribose 5'-phosphate)-2'-deoxyribonucleotide-DNA = a 3'-end 2'-deoxyribonucleotide-(2,3-dehydro-2,3-deoxyribose 5'-phosphate)-DNA + a 5'-end 5'-phospho-2'-deoxyribonucleoside-DNA + H(+)</text>
        <dbReference type="Rhea" id="RHEA:66592"/>
        <dbReference type="Rhea" id="RHEA-COMP:13180"/>
        <dbReference type="Rhea" id="RHEA-COMP:16897"/>
        <dbReference type="Rhea" id="RHEA-COMP:17067"/>
        <dbReference type="ChEBI" id="CHEBI:15378"/>
        <dbReference type="ChEBI" id="CHEBI:136412"/>
        <dbReference type="ChEBI" id="CHEBI:157695"/>
        <dbReference type="ChEBI" id="CHEBI:167181"/>
        <dbReference type="EC" id="4.2.99.18"/>
    </reaction>
</comment>
<comment type="similarity">
    <text evidence="1">Belongs to the type-2 OGG1 family.</text>
</comment>
<comment type="sequence caution" evidence="2">
    <conflict type="erroneous initiation">
        <sequence resource="EMBL-CDS" id="CAC11163"/>
    </conflict>
</comment>
<reference key="1">
    <citation type="journal article" date="2000" name="Nature">
        <title>The genome sequence of the thermoacidophilic scavenger Thermoplasma acidophilum.</title>
        <authorList>
            <person name="Ruepp A."/>
            <person name="Graml W."/>
            <person name="Santos-Martinez M.-L."/>
            <person name="Koretke K.K."/>
            <person name="Volker C."/>
            <person name="Mewes H.-W."/>
            <person name="Frishman D."/>
            <person name="Stocker S."/>
            <person name="Lupas A.N."/>
            <person name="Baumeister W."/>
        </authorList>
    </citation>
    <scope>NUCLEOTIDE SEQUENCE [LARGE SCALE GENOMIC DNA]</scope>
    <source>
        <strain>ATCC 25905 / DSM 1728 / JCM 9062 / NBRC 15155 / AMRC-C165</strain>
    </source>
</reference>
<feature type="chain" id="PRO_0000159568" description="8-oxoguanine DNA glycosylase/AP lyase">
    <location>
        <begin position="1"/>
        <end position="204"/>
    </location>
</feature>
<feature type="active site" evidence="1">
    <location>
        <position position="129"/>
    </location>
</feature>
<feature type="active site" evidence="1">
    <location>
        <position position="147"/>
    </location>
</feature>
<feature type="site" description="Important for guanine/8-oxoguanine distinction" evidence="1">
    <location>
        <position position="204"/>
    </location>
</feature>
<evidence type="ECO:0000255" key="1">
    <source>
        <dbReference type="HAMAP-Rule" id="MF_00241"/>
    </source>
</evidence>
<evidence type="ECO:0000305" key="2"/>
<dbReference type="EC" id="3.2.2.-" evidence="1"/>
<dbReference type="EC" id="4.2.99.18" evidence="1"/>
<dbReference type="EMBL" id="AL445063">
    <property type="protein sequence ID" value="CAC11163.1"/>
    <property type="status" value="ALT_INIT"/>
    <property type="molecule type" value="Genomic_DNA"/>
</dbReference>
<dbReference type="RefSeq" id="WP_010900441.1">
    <property type="nucleotide sequence ID" value="NC_002578.1"/>
</dbReference>
<dbReference type="SMR" id="Q9HM55"/>
<dbReference type="STRING" id="273075.gene:9571229"/>
<dbReference type="PaxDb" id="273075-Ta0014m"/>
<dbReference type="EnsemblBacteria" id="CAC11163">
    <property type="protein sequence ID" value="CAC11163"/>
    <property type="gene ID" value="CAC11163"/>
</dbReference>
<dbReference type="KEGG" id="tac:Ta0014"/>
<dbReference type="eggNOG" id="arCOG04357">
    <property type="taxonomic scope" value="Archaea"/>
</dbReference>
<dbReference type="HOGENOM" id="CLU_104937_0_0_2"/>
<dbReference type="InParanoid" id="Q9HM55"/>
<dbReference type="OrthoDB" id="35941at2157"/>
<dbReference type="Proteomes" id="UP000001024">
    <property type="component" value="Chromosome"/>
</dbReference>
<dbReference type="GO" id="GO:0140078">
    <property type="term" value="F:class I DNA-(apurinic or apyrimidinic site) endonuclease activity"/>
    <property type="evidence" value="ECO:0007669"/>
    <property type="project" value="UniProtKB-EC"/>
</dbReference>
<dbReference type="GO" id="GO:0016799">
    <property type="term" value="F:hydrolase activity, hydrolyzing N-glycosyl compounds"/>
    <property type="evidence" value="ECO:0007669"/>
    <property type="project" value="UniProtKB-UniRule"/>
</dbReference>
<dbReference type="GO" id="GO:0006284">
    <property type="term" value="P:base-excision repair"/>
    <property type="evidence" value="ECO:0007669"/>
    <property type="project" value="UniProtKB-UniRule"/>
</dbReference>
<dbReference type="CDD" id="cd00056">
    <property type="entry name" value="ENDO3c"/>
    <property type="match status" value="1"/>
</dbReference>
<dbReference type="Gene3D" id="1.10.1670.10">
    <property type="entry name" value="Helix-hairpin-Helix base-excision DNA repair enzymes (C-terminal)"/>
    <property type="match status" value="1"/>
</dbReference>
<dbReference type="Gene3D" id="1.10.340.30">
    <property type="entry name" value="Hypothetical protein, domain 2"/>
    <property type="match status" value="1"/>
</dbReference>
<dbReference type="HAMAP" id="MF_00241">
    <property type="entry name" value="Ogg"/>
    <property type="match status" value="1"/>
</dbReference>
<dbReference type="InterPro" id="IPR012092">
    <property type="entry name" value="DNA_glyclase/AP_lyase_Ogg"/>
</dbReference>
<dbReference type="InterPro" id="IPR011257">
    <property type="entry name" value="DNA_glycosylase"/>
</dbReference>
<dbReference type="InterPro" id="IPR003265">
    <property type="entry name" value="HhH-GPD_domain"/>
</dbReference>
<dbReference type="InterPro" id="IPR023170">
    <property type="entry name" value="HhH_base_excis_C"/>
</dbReference>
<dbReference type="NCBIfam" id="NF002305">
    <property type="entry name" value="PRK01229.1"/>
    <property type="match status" value="1"/>
</dbReference>
<dbReference type="Pfam" id="PF22175">
    <property type="entry name" value="Ogg-HhH"/>
    <property type="match status" value="1"/>
</dbReference>
<dbReference type="PIRSF" id="PIRSF005954">
    <property type="entry name" value="Thrmst_ogg"/>
    <property type="match status" value="1"/>
</dbReference>
<dbReference type="SMART" id="SM00478">
    <property type="entry name" value="ENDO3c"/>
    <property type="match status" value="1"/>
</dbReference>
<dbReference type="SUPFAM" id="SSF48150">
    <property type="entry name" value="DNA-glycosylase"/>
    <property type="match status" value="1"/>
</dbReference>
<sequence>MDSLISIPFLNDESVRSTIYRKVEEFRSIGKSSKEVLFKELVFCILAANTSASMSLRMQESIGDGFLYLSRDDLRKALKENKYRFYNVRSDFIVKSRNIIDDLPALVASPDHEGSRDYLVENVYGIGYKEASHFLRNVGIFDFAILDKHIMKWMAQYYPVKKNTSRKNYLYNEEIFRNISAGFGIEPGILDLFIWYEETGTVIK</sequence>
<accession>Q9HM55</accession>
<organism>
    <name type="scientific">Thermoplasma acidophilum (strain ATCC 25905 / DSM 1728 / JCM 9062 / NBRC 15155 / AMRC-C165)</name>
    <dbReference type="NCBI Taxonomy" id="273075"/>
    <lineage>
        <taxon>Archaea</taxon>
        <taxon>Methanobacteriati</taxon>
        <taxon>Thermoplasmatota</taxon>
        <taxon>Thermoplasmata</taxon>
        <taxon>Thermoplasmatales</taxon>
        <taxon>Thermoplasmataceae</taxon>
        <taxon>Thermoplasma</taxon>
    </lineage>
</organism>
<keyword id="KW-0227">DNA damage</keyword>
<keyword id="KW-0234">DNA repair</keyword>
<keyword id="KW-0326">Glycosidase</keyword>
<keyword id="KW-0378">Hydrolase</keyword>
<keyword id="KW-0456">Lyase</keyword>
<keyword id="KW-0511">Multifunctional enzyme</keyword>
<keyword id="KW-1185">Reference proteome</keyword>
<name>OGG1_THEAC</name>
<proteinExistence type="inferred from homology"/>